<reference key="1">
    <citation type="journal article" date="1988" name="J. Cell Biol.">
        <title>Sequence and developmental expression of mRNA coding for a gap junction protein in Xenopus.</title>
        <authorList>
            <person name="Gimlich R.L."/>
            <person name="Kumar N.M."/>
            <person name="Gilula N.B."/>
        </authorList>
    </citation>
    <scope>NUCLEOTIDE SEQUENCE [MRNA]</scope>
</reference>
<name>CXB1_XENLA</name>
<gene>
    <name type="primary">gjb1</name>
</gene>
<dbReference type="EMBL" id="Y00791">
    <property type="protein sequence ID" value="CAA68745.1"/>
    <property type="molecule type" value="mRNA"/>
</dbReference>
<dbReference type="PIR" id="A31102">
    <property type="entry name" value="A31102"/>
</dbReference>
<dbReference type="SMR" id="P08983"/>
<dbReference type="GeneID" id="394373"/>
<dbReference type="KEGG" id="xla:394373"/>
<dbReference type="AGR" id="Xenbase:XB-GENE-865435"/>
<dbReference type="CTD" id="394373"/>
<dbReference type="Xenbase" id="XB-GENE-865435">
    <property type="gene designation" value="gjb1.L"/>
</dbReference>
<dbReference type="OrthoDB" id="8934037at2759"/>
<dbReference type="Proteomes" id="UP000186698">
    <property type="component" value="Chromosome 8L"/>
</dbReference>
<dbReference type="Bgee" id="394373">
    <property type="expression patterns" value="Expressed in neurula embryo and 14 other cell types or tissues"/>
</dbReference>
<dbReference type="GO" id="GO:0005922">
    <property type="term" value="C:connexin complex"/>
    <property type="evidence" value="ECO:0000318"/>
    <property type="project" value="GO_Central"/>
</dbReference>
<dbReference type="GO" id="GO:0005243">
    <property type="term" value="F:gap junction channel activity"/>
    <property type="evidence" value="ECO:0000318"/>
    <property type="project" value="GO_Central"/>
</dbReference>
<dbReference type="GO" id="GO:0007267">
    <property type="term" value="P:cell-cell signaling"/>
    <property type="evidence" value="ECO:0000318"/>
    <property type="project" value="GO_Central"/>
</dbReference>
<dbReference type="FunFam" id="1.20.1440.80:FF:000001">
    <property type="entry name" value="Gap junction alpha-1"/>
    <property type="match status" value="1"/>
</dbReference>
<dbReference type="Gene3D" id="1.20.1440.80">
    <property type="entry name" value="Gap junction channel protein cysteine-rich domain"/>
    <property type="match status" value="1"/>
</dbReference>
<dbReference type="InterPro" id="IPR000500">
    <property type="entry name" value="Connexin"/>
</dbReference>
<dbReference type="InterPro" id="IPR002267">
    <property type="entry name" value="Connexin32"/>
</dbReference>
<dbReference type="InterPro" id="IPR019570">
    <property type="entry name" value="Connexin_CCC"/>
</dbReference>
<dbReference type="InterPro" id="IPR017990">
    <property type="entry name" value="Connexin_CS"/>
</dbReference>
<dbReference type="InterPro" id="IPR013092">
    <property type="entry name" value="Connexin_N"/>
</dbReference>
<dbReference type="InterPro" id="IPR038359">
    <property type="entry name" value="Connexin_N_sf"/>
</dbReference>
<dbReference type="PANTHER" id="PTHR11984">
    <property type="entry name" value="CONNEXIN"/>
    <property type="match status" value="1"/>
</dbReference>
<dbReference type="PANTHER" id="PTHR11984:SF20">
    <property type="entry name" value="GAP JUNCTION BETA-1 PROTEIN"/>
    <property type="match status" value="1"/>
</dbReference>
<dbReference type="Pfam" id="PF00029">
    <property type="entry name" value="Connexin"/>
    <property type="match status" value="1"/>
</dbReference>
<dbReference type="PRINTS" id="PR00206">
    <property type="entry name" value="CONNEXIN"/>
</dbReference>
<dbReference type="PRINTS" id="PR01138">
    <property type="entry name" value="CONNEXINB1"/>
</dbReference>
<dbReference type="SMART" id="SM00037">
    <property type="entry name" value="CNX"/>
    <property type="match status" value="1"/>
</dbReference>
<dbReference type="SMART" id="SM01089">
    <property type="entry name" value="Connexin_CCC"/>
    <property type="match status" value="1"/>
</dbReference>
<dbReference type="PROSITE" id="PS00407">
    <property type="entry name" value="CONNEXINS_1"/>
    <property type="match status" value="1"/>
</dbReference>
<dbReference type="PROSITE" id="PS00408">
    <property type="entry name" value="CONNEXINS_2"/>
    <property type="match status" value="1"/>
</dbReference>
<accession>P08983</accession>
<keyword id="KW-0965">Cell junction</keyword>
<keyword id="KW-1003">Cell membrane</keyword>
<keyword id="KW-0303">Gap junction</keyword>
<keyword id="KW-0472">Membrane</keyword>
<keyword id="KW-1185">Reference proteome</keyword>
<keyword id="KW-0812">Transmembrane</keyword>
<keyword id="KW-1133">Transmembrane helix</keyword>
<proteinExistence type="evidence at transcript level"/>
<protein>
    <recommendedName>
        <fullName>Gap junction beta-1 protein</fullName>
    </recommendedName>
    <alternativeName>
        <fullName>Connexin-30</fullName>
        <shortName>Cx30</shortName>
    </alternativeName>
</protein>
<evidence type="ECO:0000255" key="1"/>
<evidence type="ECO:0000305" key="2"/>
<sequence length="264" mass="29995">MNWAGLYAILSGVNRHSTSIGRIWLSVVFIFRIMVLVAAAESVWGDEKSAFTCNTQQPGCNSVCYDHFFPISHIRLWALQLIIVSTPALLVAMHVAHLQHQEKKELRLSRHVKDQELAEVKKHKVKISGTLWWTYISSVFFRIIFEAAFMYIFYLIYPGYSMIRLLKCDAYPCPNTVDCFVSRPTEKTIFTVFMLVASGVCIVLNVAEVFFLIAQACTRRARRHRDSGSISKEHQQNEMNLLITGGSIIKRSAGQEKGDHCSTS</sequence>
<comment type="function">
    <text>One gap junction consists of a cluster of closely packed pairs of transmembrane channels, the connexons, through which materials of low MW diffuse from one cell to a neighboring cell.</text>
</comment>
<comment type="subunit">
    <text>A connexon is composed of a hexamer of connexins.</text>
</comment>
<comment type="subcellular location">
    <subcellularLocation>
        <location>Cell membrane</location>
        <topology>Multi-pass membrane protein</topology>
    </subcellularLocation>
    <subcellularLocation>
        <location>Cell junction</location>
        <location>Gap junction</location>
    </subcellularLocation>
</comment>
<comment type="tissue specificity">
    <text>Lung, liver, intestines, stomach and kidney.</text>
</comment>
<comment type="similarity">
    <text evidence="2">Belongs to the connexin family. Beta-type (group I) subfamily.</text>
</comment>
<feature type="chain" id="PRO_0000057853" description="Gap junction beta-1 protein">
    <location>
        <begin position="1"/>
        <end position="264"/>
    </location>
</feature>
<feature type="topological domain" description="Cytoplasmic" evidence="1">
    <location>
        <begin position="1"/>
        <end position="22"/>
    </location>
</feature>
<feature type="transmembrane region" description="Helical" evidence="1">
    <location>
        <begin position="23"/>
        <end position="45"/>
    </location>
</feature>
<feature type="topological domain" description="Extracellular" evidence="1">
    <location>
        <begin position="46"/>
        <end position="75"/>
    </location>
</feature>
<feature type="transmembrane region" description="Helical" evidence="1">
    <location>
        <begin position="76"/>
        <end position="98"/>
    </location>
</feature>
<feature type="topological domain" description="Cytoplasmic" evidence="1">
    <location>
        <begin position="99"/>
        <end position="130"/>
    </location>
</feature>
<feature type="transmembrane region" description="Helical" evidence="1">
    <location>
        <begin position="131"/>
        <end position="153"/>
    </location>
</feature>
<feature type="topological domain" description="Extracellular" evidence="1">
    <location>
        <begin position="154"/>
        <end position="191"/>
    </location>
</feature>
<feature type="transmembrane region" description="Helical" evidence="1">
    <location>
        <begin position="192"/>
        <end position="214"/>
    </location>
</feature>
<feature type="topological domain" description="Cytoplasmic" evidence="1">
    <location>
        <begin position="215"/>
        <end position="264"/>
    </location>
</feature>
<organism>
    <name type="scientific">Xenopus laevis</name>
    <name type="common">African clawed frog</name>
    <dbReference type="NCBI Taxonomy" id="8355"/>
    <lineage>
        <taxon>Eukaryota</taxon>
        <taxon>Metazoa</taxon>
        <taxon>Chordata</taxon>
        <taxon>Craniata</taxon>
        <taxon>Vertebrata</taxon>
        <taxon>Euteleostomi</taxon>
        <taxon>Amphibia</taxon>
        <taxon>Batrachia</taxon>
        <taxon>Anura</taxon>
        <taxon>Pipoidea</taxon>
        <taxon>Pipidae</taxon>
        <taxon>Xenopodinae</taxon>
        <taxon>Xenopus</taxon>
        <taxon>Xenopus</taxon>
    </lineage>
</organism>